<reference key="1">
    <citation type="journal article" date="2004" name="Nature">
        <title>Genome evolution in yeasts.</title>
        <authorList>
            <person name="Dujon B."/>
            <person name="Sherman D."/>
            <person name="Fischer G."/>
            <person name="Durrens P."/>
            <person name="Casaregola S."/>
            <person name="Lafontaine I."/>
            <person name="de Montigny J."/>
            <person name="Marck C."/>
            <person name="Neuveglise C."/>
            <person name="Talla E."/>
            <person name="Goffard N."/>
            <person name="Frangeul L."/>
            <person name="Aigle M."/>
            <person name="Anthouard V."/>
            <person name="Babour A."/>
            <person name="Barbe V."/>
            <person name="Barnay S."/>
            <person name="Blanchin S."/>
            <person name="Beckerich J.-M."/>
            <person name="Beyne E."/>
            <person name="Bleykasten C."/>
            <person name="Boisrame A."/>
            <person name="Boyer J."/>
            <person name="Cattolico L."/>
            <person name="Confanioleri F."/>
            <person name="de Daruvar A."/>
            <person name="Despons L."/>
            <person name="Fabre E."/>
            <person name="Fairhead C."/>
            <person name="Ferry-Dumazet H."/>
            <person name="Groppi A."/>
            <person name="Hantraye F."/>
            <person name="Hennequin C."/>
            <person name="Jauniaux N."/>
            <person name="Joyet P."/>
            <person name="Kachouri R."/>
            <person name="Kerrest A."/>
            <person name="Koszul R."/>
            <person name="Lemaire M."/>
            <person name="Lesur I."/>
            <person name="Ma L."/>
            <person name="Muller H."/>
            <person name="Nicaud J.-M."/>
            <person name="Nikolski M."/>
            <person name="Oztas S."/>
            <person name="Ozier-Kalogeropoulos O."/>
            <person name="Pellenz S."/>
            <person name="Potier S."/>
            <person name="Richard G.-F."/>
            <person name="Straub M.-L."/>
            <person name="Suleau A."/>
            <person name="Swennen D."/>
            <person name="Tekaia F."/>
            <person name="Wesolowski-Louvel M."/>
            <person name="Westhof E."/>
            <person name="Wirth B."/>
            <person name="Zeniou-Meyer M."/>
            <person name="Zivanovic Y."/>
            <person name="Bolotin-Fukuhara M."/>
            <person name="Thierry A."/>
            <person name="Bouchier C."/>
            <person name="Caudron B."/>
            <person name="Scarpelli C."/>
            <person name="Gaillardin C."/>
            <person name="Weissenbach J."/>
            <person name="Wincker P."/>
            <person name="Souciet J.-L."/>
        </authorList>
    </citation>
    <scope>NUCLEOTIDE SEQUENCE [LARGE SCALE GENOMIC DNA]</scope>
    <source>
        <strain>CLIB 122 / E 150</strain>
    </source>
</reference>
<protein>
    <recommendedName>
        <fullName>Iron sulfur cluster assembly protein 1, mitochondrial</fullName>
    </recommendedName>
    <alternativeName>
        <fullName>Iron sulfur cluster scaffold protein 1</fullName>
    </alternativeName>
</protein>
<name>ISU1_YARLI</name>
<evidence type="ECO:0000250" key="1">
    <source>
        <dbReference type="UniProtKB" id="Q03020"/>
    </source>
</evidence>
<evidence type="ECO:0000250" key="2">
    <source>
        <dbReference type="UniProtKB" id="Q9UTC6"/>
    </source>
</evidence>
<evidence type="ECO:0000255" key="3"/>
<evidence type="ECO:0000256" key="4">
    <source>
        <dbReference type="SAM" id="MobiDB-lite"/>
    </source>
</evidence>
<evidence type="ECO:0000305" key="5"/>
<sequence>MMFNRITRSAGLLARARPTTTAVMSPMTPLAISRRGYHEKVLDHYNNPRNVGSMNKNDEDVGTGLVGAPACGDVMKLQIRVDDNGVIQDVKFKTFGCGSAIASSSYVTELVRGKSLAEAGKIKNTVIAKELSLPPVKLHCSMLAEDAIKSAISDYNSKRKTKNPTLGAEAAETPAAATATA</sequence>
<dbReference type="EMBL" id="CR382128">
    <property type="protein sequence ID" value="CAG82740.1"/>
    <property type="molecule type" value="Genomic_DNA"/>
</dbReference>
<dbReference type="RefSeq" id="XP_500512.1">
    <property type="nucleotide sequence ID" value="XM_500512.1"/>
</dbReference>
<dbReference type="SMR" id="Q6CFQ0"/>
<dbReference type="FunCoup" id="Q6CFQ0">
    <property type="interactions" value="551"/>
</dbReference>
<dbReference type="STRING" id="284591.Q6CFQ0"/>
<dbReference type="EnsemblFungi" id="CAG82740">
    <property type="protein sequence ID" value="CAG82740"/>
    <property type="gene ID" value="YALI0_B04928g"/>
</dbReference>
<dbReference type="KEGG" id="yli:2907434"/>
<dbReference type="VEuPathDB" id="FungiDB:YALI0_B04928g"/>
<dbReference type="HOGENOM" id="CLU_079283_1_1_1"/>
<dbReference type="InParanoid" id="Q6CFQ0"/>
<dbReference type="OMA" id="SMVTEMV"/>
<dbReference type="OrthoDB" id="45282at4891"/>
<dbReference type="UniPathway" id="UPA00266"/>
<dbReference type="Proteomes" id="UP000001300">
    <property type="component" value="Chromosome B"/>
</dbReference>
<dbReference type="GO" id="GO:0005737">
    <property type="term" value="C:cytoplasm"/>
    <property type="evidence" value="ECO:0000318"/>
    <property type="project" value="GO_Central"/>
</dbReference>
<dbReference type="GO" id="GO:0005759">
    <property type="term" value="C:mitochondrial matrix"/>
    <property type="evidence" value="ECO:0000318"/>
    <property type="project" value="GO_Central"/>
</dbReference>
<dbReference type="GO" id="GO:0051537">
    <property type="term" value="F:2 iron, 2 sulfur cluster binding"/>
    <property type="evidence" value="ECO:0000318"/>
    <property type="project" value="GO_Central"/>
</dbReference>
<dbReference type="GO" id="GO:0008198">
    <property type="term" value="F:ferrous iron binding"/>
    <property type="evidence" value="ECO:0000318"/>
    <property type="project" value="GO_Central"/>
</dbReference>
<dbReference type="GO" id="GO:0006879">
    <property type="term" value="P:intracellular iron ion homeostasis"/>
    <property type="evidence" value="ECO:0000318"/>
    <property type="project" value="GO_Central"/>
</dbReference>
<dbReference type="GO" id="GO:0016226">
    <property type="term" value="P:iron-sulfur cluster assembly"/>
    <property type="evidence" value="ECO:0007669"/>
    <property type="project" value="InterPro"/>
</dbReference>
<dbReference type="CDD" id="cd06664">
    <property type="entry name" value="IscU_like"/>
    <property type="match status" value="1"/>
</dbReference>
<dbReference type="FunFam" id="3.90.1010.10:FF:000005">
    <property type="entry name" value="Iron-sulfur cluster assembly protein"/>
    <property type="match status" value="1"/>
</dbReference>
<dbReference type="Gene3D" id="3.90.1010.10">
    <property type="match status" value="1"/>
</dbReference>
<dbReference type="InterPro" id="IPR011339">
    <property type="entry name" value="ISCU"/>
</dbReference>
<dbReference type="InterPro" id="IPR002871">
    <property type="entry name" value="NIF_FeS_clus_asmbl_NifU_N"/>
</dbReference>
<dbReference type="NCBIfam" id="TIGR01999">
    <property type="entry name" value="iscU"/>
    <property type="match status" value="1"/>
</dbReference>
<dbReference type="PANTHER" id="PTHR10093">
    <property type="entry name" value="IRON-SULFUR CLUSTER ASSEMBLY ENZYME NIFU HOMOLOG"/>
    <property type="match status" value="1"/>
</dbReference>
<dbReference type="Pfam" id="PF01592">
    <property type="entry name" value="NifU_N"/>
    <property type="match status" value="1"/>
</dbReference>
<dbReference type="SUPFAM" id="SSF82649">
    <property type="entry name" value="SufE/NifU"/>
    <property type="match status" value="1"/>
</dbReference>
<organism>
    <name type="scientific">Yarrowia lipolytica (strain CLIB 122 / E 150)</name>
    <name type="common">Yeast</name>
    <name type="synonym">Candida lipolytica</name>
    <dbReference type="NCBI Taxonomy" id="284591"/>
    <lineage>
        <taxon>Eukaryota</taxon>
        <taxon>Fungi</taxon>
        <taxon>Dikarya</taxon>
        <taxon>Ascomycota</taxon>
        <taxon>Saccharomycotina</taxon>
        <taxon>Dipodascomycetes</taxon>
        <taxon>Dipodascales</taxon>
        <taxon>Dipodascales incertae sedis</taxon>
        <taxon>Yarrowia</taxon>
    </lineage>
</organism>
<keyword id="KW-0001">2Fe-2S</keyword>
<keyword id="KW-0408">Iron</keyword>
<keyword id="KW-0411">Iron-sulfur</keyword>
<keyword id="KW-0479">Metal-binding</keyword>
<keyword id="KW-0496">Mitochondrion</keyword>
<keyword id="KW-1185">Reference proteome</keyword>
<keyword id="KW-0809">Transit peptide</keyword>
<comment type="function">
    <text evidence="1">Scaffold protein for the de novo synthesis of iron-sulfur (Fe-S) clusters within mitochondria, which is required for maturation of both mitochondrial and cytoplasmic [2Fe-2S] and [4Fe-4S] proteins. First, a [2Fe-2S] cluster is transiently assembled on the scaffold protein ISU1. In a second step, the cluster is released from ISU1, transferred to a glutaredoxin, followed by the formation of mitochondrial [2Fe-2S] proteins, the synthesis of [4Fe-4S] clusters and their target-specific insertion into the recipient apoproteins. Cluster assembly on ISU1 depends on the function of the cysteine desulfurase complex NFS1-ISD11, which serves as the sulfur donor for cluster synthesis, the iron-binding protein frataxin as the putative iron donor, and the electron transfer chain comprised of ferredoxin reductase and ferredoxin, which receive their electrons from NADH.</text>
</comment>
<comment type="cofactor">
    <cofactor evidence="2">
        <name>[2Fe-2S] cluster</name>
        <dbReference type="ChEBI" id="CHEBI:190135"/>
    </cofactor>
    <text evidence="2">Binds 1 [2Fe-2S] cluster per subunit.</text>
</comment>
<comment type="pathway">
    <text evidence="1">Cofactor biosynthesis; iron-sulfur cluster biosynthesis.</text>
</comment>
<comment type="subunit">
    <text evidence="1">Component of the core Fe-S cluster (ISC) assembly machinery.</text>
</comment>
<comment type="subcellular location">
    <subcellularLocation>
        <location evidence="1">Mitochondrion matrix</location>
    </subcellularLocation>
</comment>
<comment type="similarity">
    <text evidence="5">Belongs to the NifU family.</text>
</comment>
<feature type="transit peptide" description="Mitochondrion" evidence="3">
    <location>
        <begin position="1"/>
        <end status="unknown"/>
    </location>
</feature>
<feature type="chain" id="PRO_0000019699" description="Iron sulfur cluster assembly protein 1, mitochondrial">
    <location>
        <begin status="unknown"/>
        <end position="181"/>
    </location>
</feature>
<feature type="region of interest" description="Disordered" evidence="4">
    <location>
        <begin position="159"/>
        <end position="181"/>
    </location>
</feature>
<feature type="compositionally biased region" description="Low complexity" evidence="4">
    <location>
        <begin position="168"/>
        <end position="181"/>
    </location>
</feature>
<proteinExistence type="inferred from homology"/>
<gene>
    <name type="primary">ISU1</name>
    <name type="ordered locus">YALI0B04928g</name>
</gene>
<accession>Q6CFQ0</accession>